<reference key="1">
    <citation type="journal article" date="2009" name="PLoS Genet.">
        <title>Organised genome dynamics in the Escherichia coli species results in highly diverse adaptive paths.</title>
        <authorList>
            <person name="Touchon M."/>
            <person name="Hoede C."/>
            <person name="Tenaillon O."/>
            <person name="Barbe V."/>
            <person name="Baeriswyl S."/>
            <person name="Bidet P."/>
            <person name="Bingen E."/>
            <person name="Bonacorsi S."/>
            <person name="Bouchier C."/>
            <person name="Bouvet O."/>
            <person name="Calteau A."/>
            <person name="Chiapello H."/>
            <person name="Clermont O."/>
            <person name="Cruveiller S."/>
            <person name="Danchin A."/>
            <person name="Diard M."/>
            <person name="Dossat C."/>
            <person name="Karoui M.E."/>
            <person name="Frapy E."/>
            <person name="Garry L."/>
            <person name="Ghigo J.M."/>
            <person name="Gilles A.M."/>
            <person name="Johnson J."/>
            <person name="Le Bouguenec C."/>
            <person name="Lescat M."/>
            <person name="Mangenot S."/>
            <person name="Martinez-Jehanne V."/>
            <person name="Matic I."/>
            <person name="Nassif X."/>
            <person name="Oztas S."/>
            <person name="Petit M.A."/>
            <person name="Pichon C."/>
            <person name="Rouy Z."/>
            <person name="Ruf C.S."/>
            <person name="Schneider D."/>
            <person name="Tourret J."/>
            <person name="Vacherie B."/>
            <person name="Vallenet D."/>
            <person name="Medigue C."/>
            <person name="Rocha E.P.C."/>
            <person name="Denamur E."/>
        </authorList>
    </citation>
    <scope>NUCLEOTIDE SEQUENCE [LARGE SCALE GENOMIC DNA]</scope>
    <source>
        <strain>IAI1</strain>
    </source>
</reference>
<name>HCHA_ECO8A</name>
<protein>
    <recommendedName>
        <fullName evidence="1">Protein/nucleic acid deglycase HchA</fullName>
        <ecNumber evidence="1">3.1.2.-</ecNumber>
        <ecNumber evidence="1">3.5.1.-</ecNumber>
        <ecNumber evidence="1">3.5.1.124</ecNumber>
    </recommendedName>
    <alternativeName>
        <fullName evidence="1">Maillard deglycase</fullName>
    </alternativeName>
</protein>
<accession>B7M3A5</accession>
<evidence type="ECO:0000255" key="1">
    <source>
        <dbReference type="HAMAP-Rule" id="MF_01046"/>
    </source>
</evidence>
<feature type="chain" id="PRO_1000136177" description="Protein/nucleic acid deglycase HchA">
    <location>
        <begin position="1"/>
        <end position="283"/>
    </location>
</feature>
<feature type="active site" description="Nucleophile" evidence="1">
    <location>
        <position position="185"/>
    </location>
</feature>
<feature type="binding site" evidence="1">
    <location>
        <position position="86"/>
    </location>
    <ligand>
        <name>Zn(2+)</name>
        <dbReference type="ChEBI" id="CHEBI:29105"/>
    </ligand>
</feature>
<feature type="binding site" evidence="1">
    <location>
        <position position="91"/>
    </location>
    <ligand>
        <name>Zn(2+)</name>
        <dbReference type="ChEBI" id="CHEBI:29105"/>
    </ligand>
</feature>
<feature type="binding site" evidence="1">
    <location>
        <position position="123"/>
    </location>
    <ligand>
        <name>Zn(2+)</name>
        <dbReference type="ChEBI" id="CHEBI:29105"/>
    </ligand>
</feature>
<sequence length="283" mass="31173">MTVQKSKNPQVDIAEDNAFFPSEYSLSQYTSPVSDLDGVDYPKPYRGKHKILVIAADERYLPTDNGKLFSTGNHPIETLLPLYHLHAAGFEFEVATISGLMTKFEYWAMPHKDEKVMPFFEQHKSLFRNPKKLADVVASLNADSEYAAIFVPGGHGALIGLPESQDVAAALQWAIKNDRFVISLCHGPAAFLALRHGDNPLNGYSICAFPDAADKQTPEIGYMPGHLTWYFGEELKKMGMNIINDDIAGRVHKDRKVLTGDSPFAANALGKLAAQEMLAAYAG</sequence>
<organism>
    <name type="scientific">Escherichia coli O8 (strain IAI1)</name>
    <dbReference type="NCBI Taxonomy" id="585034"/>
    <lineage>
        <taxon>Bacteria</taxon>
        <taxon>Pseudomonadati</taxon>
        <taxon>Pseudomonadota</taxon>
        <taxon>Gammaproteobacteria</taxon>
        <taxon>Enterobacterales</taxon>
        <taxon>Enterobacteriaceae</taxon>
        <taxon>Escherichia</taxon>
    </lineage>
</organism>
<keyword id="KW-0963">Cytoplasm</keyword>
<keyword id="KW-0227">DNA damage</keyword>
<keyword id="KW-0234">DNA repair</keyword>
<keyword id="KW-0378">Hydrolase</keyword>
<keyword id="KW-0479">Metal-binding</keyword>
<keyword id="KW-0346">Stress response</keyword>
<keyword id="KW-0862">Zinc</keyword>
<proteinExistence type="inferred from homology"/>
<gene>
    <name evidence="1" type="primary">hchA</name>
    <name type="ordered locus">ECIAI1_2047</name>
</gene>
<dbReference type="EC" id="3.1.2.-" evidence="1"/>
<dbReference type="EC" id="3.5.1.-" evidence="1"/>
<dbReference type="EC" id="3.5.1.124" evidence="1"/>
<dbReference type="EMBL" id="CU928160">
    <property type="protein sequence ID" value="CAQ98897.1"/>
    <property type="molecule type" value="Genomic_DNA"/>
</dbReference>
<dbReference type="RefSeq" id="WP_000218047.1">
    <property type="nucleotide sequence ID" value="NC_011741.1"/>
</dbReference>
<dbReference type="SMR" id="B7M3A5"/>
<dbReference type="MEROPS" id="C56.006"/>
<dbReference type="KEGG" id="ecr:ECIAI1_2047"/>
<dbReference type="HOGENOM" id="CLU_066933_0_0_6"/>
<dbReference type="GO" id="GO:0005737">
    <property type="term" value="C:cytoplasm"/>
    <property type="evidence" value="ECO:0007669"/>
    <property type="project" value="UniProtKB-SubCell"/>
</dbReference>
<dbReference type="GO" id="GO:0019172">
    <property type="term" value="F:glyoxalase III activity"/>
    <property type="evidence" value="ECO:0007669"/>
    <property type="project" value="TreeGrafter"/>
</dbReference>
<dbReference type="GO" id="GO:0036524">
    <property type="term" value="F:protein deglycase activity"/>
    <property type="evidence" value="ECO:0007669"/>
    <property type="project" value="UniProtKB-UniRule"/>
</dbReference>
<dbReference type="GO" id="GO:0016790">
    <property type="term" value="F:thiolester hydrolase activity"/>
    <property type="evidence" value="ECO:0007669"/>
    <property type="project" value="UniProtKB-UniRule"/>
</dbReference>
<dbReference type="GO" id="GO:0008270">
    <property type="term" value="F:zinc ion binding"/>
    <property type="evidence" value="ECO:0007669"/>
    <property type="project" value="UniProtKB-UniRule"/>
</dbReference>
<dbReference type="GO" id="GO:0006281">
    <property type="term" value="P:DNA repair"/>
    <property type="evidence" value="ECO:0007669"/>
    <property type="project" value="UniProtKB-UniRule"/>
</dbReference>
<dbReference type="GO" id="GO:0019243">
    <property type="term" value="P:methylglyoxal catabolic process to D-lactate via S-lactoyl-glutathione"/>
    <property type="evidence" value="ECO:0007669"/>
    <property type="project" value="TreeGrafter"/>
</dbReference>
<dbReference type="GO" id="GO:0030091">
    <property type="term" value="P:protein repair"/>
    <property type="evidence" value="ECO:0007669"/>
    <property type="project" value="UniProtKB-UniRule"/>
</dbReference>
<dbReference type="FunFam" id="3.40.50.880:FF:000026">
    <property type="entry name" value="Protein/nucleic acid deglycase HchA"/>
    <property type="match status" value="1"/>
</dbReference>
<dbReference type="Gene3D" id="3.40.50.880">
    <property type="match status" value="1"/>
</dbReference>
<dbReference type="HAMAP" id="MF_01046">
    <property type="entry name" value="Deglycase_HchA"/>
    <property type="match status" value="1"/>
</dbReference>
<dbReference type="InterPro" id="IPR029062">
    <property type="entry name" value="Class_I_gatase-like"/>
</dbReference>
<dbReference type="InterPro" id="IPR017283">
    <property type="entry name" value="HchA"/>
</dbReference>
<dbReference type="InterPro" id="IPR050325">
    <property type="entry name" value="Prot/Nucl_acid_deglycase"/>
</dbReference>
<dbReference type="NCBIfam" id="NF003168">
    <property type="entry name" value="PRK04155.1"/>
    <property type="match status" value="1"/>
</dbReference>
<dbReference type="PANTHER" id="PTHR48094">
    <property type="entry name" value="PROTEIN/NUCLEIC ACID DEGLYCASE DJ-1-RELATED"/>
    <property type="match status" value="1"/>
</dbReference>
<dbReference type="PANTHER" id="PTHR48094:SF20">
    <property type="entry name" value="PROTEIN_NUCLEIC ACID DEGLYCASE 1"/>
    <property type="match status" value="1"/>
</dbReference>
<dbReference type="PIRSF" id="PIRSF037798">
    <property type="entry name" value="Chaperone_HchA"/>
    <property type="match status" value="1"/>
</dbReference>
<dbReference type="SUPFAM" id="SSF52317">
    <property type="entry name" value="Class I glutamine amidotransferase-like"/>
    <property type="match status" value="1"/>
</dbReference>
<comment type="function">
    <text evidence="1">Protein and nucleotide deglycase that catalyzes the deglycation of the Maillard adducts formed between amino groups of proteins or nucleotides and reactive carbonyl groups of glyoxals. Thus, functions as a protein deglycase that repairs methylglyoxal- and glyoxal-glycated proteins, and releases repaired proteins and lactate or glycolate, respectively. Deglycates cysteine, arginine and lysine residues in proteins, and thus reactivates these proteins by reversing glycation by glyoxals. Acts on early glycation intermediates (hemithioacetals and aminocarbinols), preventing the formation of Schiff bases and advanced glycation endproducts (AGE). Also functions as a nucleotide deglycase able to repair glycated guanine in the free nucleotide pool (GTP, GDP, GMP, dGTP) and in DNA and RNA. Is thus involved in a major nucleotide repair system named guanine glycation repair (GG repair), dedicated to reversing methylglyoxal and glyoxal damage via nucleotide sanitization and direct nucleic acid repair. Plays an important role in protecting cells from carbonyl stress.</text>
</comment>
<comment type="catalytic activity">
    <reaction evidence="1">
        <text>N(omega)-(1-hydroxy-2-oxopropyl)-L-arginyl-[protein] + H2O = lactate + L-arginyl-[protein] + H(+)</text>
        <dbReference type="Rhea" id="RHEA:49548"/>
        <dbReference type="Rhea" id="RHEA-COMP:10532"/>
        <dbReference type="Rhea" id="RHEA-COMP:12428"/>
        <dbReference type="ChEBI" id="CHEBI:15377"/>
        <dbReference type="ChEBI" id="CHEBI:15378"/>
        <dbReference type="ChEBI" id="CHEBI:24996"/>
        <dbReference type="ChEBI" id="CHEBI:29965"/>
        <dbReference type="ChEBI" id="CHEBI:131708"/>
        <dbReference type="EC" id="3.5.1.124"/>
    </reaction>
</comment>
<comment type="catalytic activity">
    <reaction evidence="1">
        <text>N(6)-(1-hydroxy-2-oxopropyl)-L-lysyl-[protein] + H2O = lactate + L-lysyl-[protein] + H(+)</text>
        <dbReference type="Rhea" id="RHEA:49552"/>
        <dbReference type="Rhea" id="RHEA-COMP:9752"/>
        <dbReference type="Rhea" id="RHEA-COMP:12429"/>
        <dbReference type="ChEBI" id="CHEBI:15377"/>
        <dbReference type="ChEBI" id="CHEBI:15378"/>
        <dbReference type="ChEBI" id="CHEBI:24996"/>
        <dbReference type="ChEBI" id="CHEBI:29969"/>
        <dbReference type="ChEBI" id="CHEBI:131709"/>
        <dbReference type="EC" id="3.5.1.124"/>
    </reaction>
</comment>
<comment type="catalytic activity">
    <reaction evidence="1">
        <text>S-(1-hydroxy-2-oxopropyl)-L-cysteinyl-[protein] + H2O = lactate + L-cysteinyl-[protein] + H(+)</text>
        <dbReference type="Rhea" id="RHEA:49556"/>
        <dbReference type="Rhea" id="RHEA-COMP:10131"/>
        <dbReference type="Rhea" id="RHEA-COMP:12430"/>
        <dbReference type="ChEBI" id="CHEBI:15377"/>
        <dbReference type="ChEBI" id="CHEBI:15378"/>
        <dbReference type="ChEBI" id="CHEBI:24996"/>
        <dbReference type="ChEBI" id="CHEBI:29950"/>
        <dbReference type="ChEBI" id="CHEBI:131710"/>
        <dbReference type="EC" id="3.5.1.124"/>
    </reaction>
</comment>
<comment type="catalytic activity">
    <reaction evidence="1">
        <text>N(omega)-(1-hydroxy-2-oxoethyl)-L-arginyl-[protein] + H2O = L-arginyl-[protein] + glycolate + H(+)</text>
        <dbReference type="Rhea" id="RHEA:57188"/>
        <dbReference type="Rhea" id="RHEA-COMP:10532"/>
        <dbReference type="Rhea" id="RHEA-COMP:14844"/>
        <dbReference type="ChEBI" id="CHEBI:15377"/>
        <dbReference type="ChEBI" id="CHEBI:15378"/>
        <dbReference type="ChEBI" id="CHEBI:29805"/>
        <dbReference type="ChEBI" id="CHEBI:29965"/>
        <dbReference type="ChEBI" id="CHEBI:141553"/>
        <dbReference type="EC" id="3.5.1.124"/>
    </reaction>
</comment>
<comment type="catalytic activity">
    <reaction evidence="1">
        <text>N(6)-(1-hydroxy-2-oxoethyl)-L-lysyl-[protein] + H2O = glycolate + L-lysyl-[protein] + H(+)</text>
        <dbReference type="Rhea" id="RHEA:57192"/>
        <dbReference type="Rhea" id="RHEA-COMP:9752"/>
        <dbReference type="Rhea" id="RHEA-COMP:14845"/>
        <dbReference type="ChEBI" id="CHEBI:15377"/>
        <dbReference type="ChEBI" id="CHEBI:15378"/>
        <dbReference type="ChEBI" id="CHEBI:29805"/>
        <dbReference type="ChEBI" id="CHEBI:29969"/>
        <dbReference type="ChEBI" id="CHEBI:141554"/>
        <dbReference type="EC" id="3.5.1.124"/>
    </reaction>
</comment>
<comment type="catalytic activity">
    <reaction evidence="1">
        <text>S-(1-hydroxy-2-oxoethyl)-L-cysteinyl-[protein] + H2O = glycolate + L-cysteinyl-[protein] + H(+)</text>
        <dbReference type="Rhea" id="RHEA:57196"/>
        <dbReference type="Rhea" id="RHEA-COMP:10131"/>
        <dbReference type="Rhea" id="RHEA-COMP:14846"/>
        <dbReference type="ChEBI" id="CHEBI:15377"/>
        <dbReference type="ChEBI" id="CHEBI:15378"/>
        <dbReference type="ChEBI" id="CHEBI:29805"/>
        <dbReference type="ChEBI" id="CHEBI:29950"/>
        <dbReference type="ChEBI" id="CHEBI:141555"/>
        <dbReference type="EC" id="3.5.1.124"/>
    </reaction>
</comment>
<comment type="catalytic activity">
    <reaction evidence="1">
        <text>N(2)-(1-hydroxy-2-oxopropyl)-dGTP + H2O = lactate + dGTP + H(+)</text>
        <dbReference type="Rhea" id="RHEA:57244"/>
        <dbReference type="ChEBI" id="CHEBI:15377"/>
        <dbReference type="ChEBI" id="CHEBI:15378"/>
        <dbReference type="ChEBI" id="CHEBI:24996"/>
        <dbReference type="ChEBI" id="CHEBI:61429"/>
        <dbReference type="ChEBI" id="CHEBI:141569"/>
    </reaction>
</comment>
<comment type="catalytic activity">
    <reaction evidence="1">
        <text>N(2)-(1-hydroxy-2-oxopropyl)-GTP + H2O = lactate + GTP + H(+)</text>
        <dbReference type="Rhea" id="RHEA:57256"/>
        <dbReference type="ChEBI" id="CHEBI:15377"/>
        <dbReference type="ChEBI" id="CHEBI:15378"/>
        <dbReference type="ChEBI" id="CHEBI:24996"/>
        <dbReference type="ChEBI" id="CHEBI:37565"/>
        <dbReference type="ChEBI" id="CHEBI:141570"/>
    </reaction>
</comment>
<comment type="catalytic activity">
    <reaction evidence="1">
        <text>N(2)-(1-hydroxy-2-oxopropyl)-GDP + H2O = lactate + GDP + H(+)</text>
        <dbReference type="Rhea" id="RHEA:57260"/>
        <dbReference type="ChEBI" id="CHEBI:15377"/>
        <dbReference type="ChEBI" id="CHEBI:15378"/>
        <dbReference type="ChEBI" id="CHEBI:24996"/>
        <dbReference type="ChEBI" id="CHEBI:58189"/>
        <dbReference type="ChEBI" id="CHEBI:141573"/>
    </reaction>
</comment>
<comment type="catalytic activity">
    <reaction evidence="1">
        <text>N(2)-(1-hydroxy-2-oxopropyl)-GMP + H2O = lactate + GMP + H(+)</text>
        <dbReference type="Rhea" id="RHEA:57268"/>
        <dbReference type="ChEBI" id="CHEBI:15377"/>
        <dbReference type="ChEBI" id="CHEBI:15378"/>
        <dbReference type="ChEBI" id="CHEBI:24996"/>
        <dbReference type="ChEBI" id="CHEBI:58115"/>
        <dbReference type="ChEBI" id="CHEBI:141575"/>
    </reaction>
</comment>
<comment type="catalytic activity">
    <reaction evidence="1">
        <text>N(2)-(1-hydroxy-2-oxoethyl)-dGTP + H2O = dGTP + glycolate + H(+)</text>
        <dbReference type="Rhea" id="RHEA:57248"/>
        <dbReference type="ChEBI" id="CHEBI:15377"/>
        <dbReference type="ChEBI" id="CHEBI:15378"/>
        <dbReference type="ChEBI" id="CHEBI:29805"/>
        <dbReference type="ChEBI" id="CHEBI:61429"/>
        <dbReference type="ChEBI" id="CHEBI:141572"/>
    </reaction>
</comment>
<comment type="catalytic activity">
    <reaction evidence="1">
        <text>N(2)-(1-hydroxy-2-oxoethyl)-GTP + H2O = glycolate + GTP + H(+)</text>
        <dbReference type="Rhea" id="RHEA:57252"/>
        <dbReference type="ChEBI" id="CHEBI:15377"/>
        <dbReference type="ChEBI" id="CHEBI:15378"/>
        <dbReference type="ChEBI" id="CHEBI:29805"/>
        <dbReference type="ChEBI" id="CHEBI:37565"/>
        <dbReference type="ChEBI" id="CHEBI:141571"/>
    </reaction>
</comment>
<comment type="catalytic activity">
    <reaction evidence="1">
        <text>N(2)-(1-hydroxy-2-oxoethyl)-GDP + H2O = glycolate + GDP + H(+)</text>
        <dbReference type="Rhea" id="RHEA:57264"/>
        <dbReference type="ChEBI" id="CHEBI:15377"/>
        <dbReference type="ChEBI" id="CHEBI:15378"/>
        <dbReference type="ChEBI" id="CHEBI:29805"/>
        <dbReference type="ChEBI" id="CHEBI:58189"/>
        <dbReference type="ChEBI" id="CHEBI:141574"/>
    </reaction>
</comment>
<comment type="catalytic activity">
    <reaction evidence="1">
        <text>N(2)-(1-hydroxy-2-oxoethyl)-GMP + H2O = glycolate + GMP + H(+)</text>
        <dbReference type="Rhea" id="RHEA:57304"/>
        <dbReference type="ChEBI" id="CHEBI:15377"/>
        <dbReference type="ChEBI" id="CHEBI:15378"/>
        <dbReference type="ChEBI" id="CHEBI:29805"/>
        <dbReference type="ChEBI" id="CHEBI:58115"/>
        <dbReference type="ChEBI" id="CHEBI:141576"/>
    </reaction>
</comment>
<comment type="catalytic activity">
    <reaction evidence="1">
        <text>an N(2)-(1-hydroxy-2-oxopropyl)-guanosine in RNA + H2O = a guanosine in RNA + lactate + H(+)</text>
        <dbReference type="Rhea" id="RHEA:57288"/>
        <dbReference type="Rhea" id="RHEA-COMP:14855"/>
        <dbReference type="Rhea" id="RHEA-COMP:14858"/>
        <dbReference type="ChEBI" id="CHEBI:15377"/>
        <dbReference type="ChEBI" id="CHEBI:15378"/>
        <dbReference type="ChEBI" id="CHEBI:24996"/>
        <dbReference type="ChEBI" id="CHEBI:74269"/>
        <dbReference type="ChEBI" id="CHEBI:141580"/>
    </reaction>
</comment>
<comment type="catalytic activity">
    <reaction evidence="1">
        <text>an N(2)-(1-hydroxy-2-oxopropyl)-2'-deoxyguanosine in DNA + H2O = a 2'-deoxyguanosine in DNA + lactate + H(+)</text>
        <dbReference type="Rhea" id="RHEA:57300"/>
        <dbReference type="Rhea" id="RHEA-COMP:11367"/>
        <dbReference type="Rhea" id="RHEA-COMP:14856"/>
        <dbReference type="ChEBI" id="CHEBI:15377"/>
        <dbReference type="ChEBI" id="CHEBI:15378"/>
        <dbReference type="ChEBI" id="CHEBI:24996"/>
        <dbReference type="ChEBI" id="CHEBI:85445"/>
        <dbReference type="ChEBI" id="CHEBI:141578"/>
    </reaction>
</comment>
<comment type="catalytic activity">
    <reaction evidence="1">
        <text>an N(2)-(1-hydroxy-2-oxoethyl)-guanosine in RNA + H2O = a guanosine in RNA + glycolate + H(+)</text>
        <dbReference type="Rhea" id="RHEA:57292"/>
        <dbReference type="Rhea" id="RHEA-COMP:14855"/>
        <dbReference type="Rhea" id="RHEA-COMP:14859"/>
        <dbReference type="ChEBI" id="CHEBI:15377"/>
        <dbReference type="ChEBI" id="CHEBI:15378"/>
        <dbReference type="ChEBI" id="CHEBI:29805"/>
        <dbReference type="ChEBI" id="CHEBI:74269"/>
        <dbReference type="ChEBI" id="CHEBI:141581"/>
    </reaction>
</comment>
<comment type="catalytic activity">
    <reaction evidence="1">
        <text>an N(2)-(1-hydroxy-2-oxoethyl)-2'-deoxyguanosine in DNA + H2O = a 2'-deoxyguanosine in DNA + glycolate + H(+)</text>
        <dbReference type="Rhea" id="RHEA:57296"/>
        <dbReference type="Rhea" id="RHEA-COMP:11367"/>
        <dbReference type="Rhea" id="RHEA-COMP:14857"/>
        <dbReference type="ChEBI" id="CHEBI:15377"/>
        <dbReference type="ChEBI" id="CHEBI:15378"/>
        <dbReference type="ChEBI" id="CHEBI:29805"/>
        <dbReference type="ChEBI" id="CHEBI:85445"/>
        <dbReference type="ChEBI" id="CHEBI:141579"/>
    </reaction>
</comment>
<comment type="subunit">
    <text evidence="1">Homodimer.</text>
</comment>
<comment type="subcellular location">
    <subcellularLocation>
        <location evidence="1">Cytoplasm</location>
    </subcellularLocation>
</comment>
<comment type="induction">
    <text evidence="1">By heat shock.</text>
</comment>
<comment type="similarity">
    <text evidence="1">Belongs to the peptidase C56 family. HchA subfamily.</text>
</comment>